<dbReference type="EMBL" id="AE000516">
    <property type="protein sequence ID" value="AAK44427.1"/>
    <property type="molecule type" value="Genomic_DNA"/>
</dbReference>
<dbReference type="PIR" id="A70838">
    <property type="entry name" value="A70838"/>
</dbReference>
<dbReference type="RefSeq" id="WP_003401168.1">
    <property type="nucleotide sequence ID" value="NZ_KK341227.1"/>
</dbReference>
<dbReference type="SMR" id="P9WME0"/>
<dbReference type="KEGG" id="mtc:MT0206"/>
<dbReference type="PATRIC" id="fig|83331.31.peg.225"/>
<dbReference type="HOGENOM" id="CLU_069356_28_1_11"/>
<dbReference type="Proteomes" id="UP000001020">
    <property type="component" value="Chromosome"/>
</dbReference>
<dbReference type="GO" id="GO:0003677">
    <property type="term" value="F:DNA binding"/>
    <property type="evidence" value="ECO:0007669"/>
    <property type="project" value="UniProtKB-KW"/>
</dbReference>
<dbReference type="Gene3D" id="1.10.357.10">
    <property type="entry name" value="Tetracycline Repressor, domain 2"/>
    <property type="match status" value="1"/>
</dbReference>
<dbReference type="InterPro" id="IPR009057">
    <property type="entry name" value="Homeodomain-like_sf"/>
</dbReference>
<dbReference type="InterPro" id="IPR001647">
    <property type="entry name" value="HTH_TetR"/>
</dbReference>
<dbReference type="InterPro" id="IPR036271">
    <property type="entry name" value="Tet_transcr_reg_TetR-rel_C_sf"/>
</dbReference>
<dbReference type="InterPro" id="IPR054156">
    <property type="entry name" value="YxaF_TetR_C"/>
</dbReference>
<dbReference type="PANTHER" id="PTHR47506:SF3">
    <property type="entry name" value="HTH-TYPE TRANSCRIPTIONAL REGULATOR LMRA"/>
    <property type="match status" value="1"/>
</dbReference>
<dbReference type="PANTHER" id="PTHR47506">
    <property type="entry name" value="TRANSCRIPTIONAL REGULATORY PROTEIN"/>
    <property type="match status" value="1"/>
</dbReference>
<dbReference type="Pfam" id="PF21993">
    <property type="entry name" value="TetR_C_13_2"/>
    <property type="match status" value="1"/>
</dbReference>
<dbReference type="Pfam" id="PF00440">
    <property type="entry name" value="TetR_N"/>
    <property type="match status" value="1"/>
</dbReference>
<dbReference type="SUPFAM" id="SSF46689">
    <property type="entry name" value="Homeodomain-like"/>
    <property type="match status" value="1"/>
</dbReference>
<dbReference type="SUPFAM" id="SSF48498">
    <property type="entry name" value="Tetracyclin repressor-like, C-terminal domain"/>
    <property type="match status" value="1"/>
</dbReference>
<proteinExistence type="predicted"/>
<sequence>MQGPRERMVVSAALLIRERGAHATAISDVLQHSGAPRGSAYHYFPGGRTQLLCEAVDYAGEHVAAMINEAEGGLELLDALIDKYRQQLLSTDFRAGCPIAAVSVEAGDEQDRERMAPVIARAAAVFDRWSDLTAQRFIADGIPPDRAHELAVLATSTLEGAILLARVRRDLTPLDLVHRQLRNLLLAELPERSR</sequence>
<feature type="chain" id="PRO_0000427320" description="Uncharacterized HTH-type transcriptional regulator MT0206">
    <location>
        <begin position="1"/>
        <end position="194"/>
    </location>
</feature>
<feature type="domain" description="HTH tetR-type">
    <location>
        <begin position="2"/>
        <end position="62"/>
    </location>
</feature>
<feature type="DNA-binding region" description="H-T-H motif" evidence="1">
    <location>
        <begin position="25"/>
        <end position="44"/>
    </location>
</feature>
<name>Y196_MYCTO</name>
<gene>
    <name type="ordered locus">MT0206</name>
</gene>
<accession>P9WME0</accession>
<accession>L0T2T3</accession>
<accession>O53647</accession>
<accession>Q7DAA6</accession>
<keyword id="KW-0238">DNA-binding</keyword>
<keyword id="KW-1185">Reference proteome</keyword>
<keyword id="KW-0804">Transcription</keyword>
<keyword id="KW-0805">Transcription regulation</keyword>
<reference key="1">
    <citation type="journal article" date="2002" name="J. Bacteriol.">
        <title>Whole-genome comparison of Mycobacterium tuberculosis clinical and laboratory strains.</title>
        <authorList>
            <person name="Fleischmann R.D."/>
            <person name="Alland D."/>
            <person name="Eisen J.A."/>
            <person name="Carpenter L."/>
            <person name="White O."/>
            <person name="Peterson J.D."/>
            <person name="DeBoy R.T."/>
            <person name="Dodson R.J."/>
            <person name="Gwinn M.L."/>
            <person name="Haft D.H."/>
            <person name="Hickey E.K."/>
            <person name="Kolonay J.F."/>
            <person name="Nelson W.C."/>
            <person name="Umayam L.A."/>
            <person name="Ermolaeva M.D."/>
            <person name="Salzberg S.L."/>
            <person name="Delcher A."/>
            <person name="Utterback T.R."/>
            <person name="Weidman J.F."/>
            <person name="Khouri H.M."/>
            <person name="Gill J."/>
            <person name="Mikula A."/>
            <person name="Bishai W."/>
            <person name="Jacobs W.R. Jr."/>
            <person name="Venter J.C."/>
            <person name="Fraser C.M."/>
        </authorList>
    </citation>
    <scope>NUCLEOTIDE SEQUENCE [LARGE SCALE GENOMIC DNA]</scope>
    <source>
        <strain>CDC 1551 / Oshkosh</strain>
    </source>
</reference>
<organism>
    <name type="scientific">Mycobacterium tuberculosis (strain CDC 1551 / Oshkosh)</name>
    <dbReference type="NCBI Taxonomy" id="83331"/>
    <lineage>
        <taxon>Bacteria</taxon>
        <taxon>Bacillati</taxon>
        <taxon>Actinomycetota</taxon>
        <taxon>Actinomycetes</taxon>
        <taxon>Mycobacteriales</taxon>
        <taxon>Mycobacteriaceae</taxon>
        <taxon>Mycobacterium</taxon>
        <taxon>Mycobacterium tuberculosis complex</taxon>
    </lineage>
</organism>
<protein>
    <recommendedName>
        <fullName>Uncharacterized HTH-type transcriptional regulator MT0206</fullName>
    </recommendedName>
</protein>
<evidence type="ECO:0000250" key="1"/>